<evidence type="ECO:0000255" key="1">
    <source>
        <dbReference type="HAMAP-Rule" id="MF_00503"/>
    </source>
</evidence>
<evidence type="ECO:0000305" key="2"/>
<proteinExistence type="inferred from homology"/>
<organism>
    <name type="scientific">Acinetobacter baumannii (strain AB307-0294)</name>
    <dbReference type="NCBI Taxonomy" id="557600"/>
    <lineage>
        <taxon>Bacteria</taxon>
        <taxon>Pseudomonadati</taxon>
        <taxon>Pseudomonadota</taxon>
        <taxon>Gammaproteobacteria</taxon>
        <taxon>Moraxellales</taxon>
        <taxon>Moraxellaceae</taxon>
        <taxon>Acinetobacter</taxon>
        <taxon>Acinetobacter calcoaceticus/baumannii complex</taxon>
    </lineage>
</organism>
<reference key="1">
    <citation type="journal article" date="2008" name="J. Bacteriol.">
        <title>Comparative genome sequence analysis of multidrug-resistant Acinetobacter baumannii.</title>
        <authorList>
            <person name="Adams M.D."/>
            <person name="Goglin K."/>
            <person name="Molyneaux N."/>
            <person name="Hujer K.M."/>
            <person name="Lavender H."/>
            <person name="Jamison J.J."/>
            <person name="MacDonald I.J."/>
            <person name="Martin K.M."/>
            <person name="Russo T."/>
            <person name="Campagnari A.A."/>
            <person name="Hujer A.M."/>
            <person name="Bonomo R.A."/>
            <person name="Gill S.R."/>
        </authorList>
    </citation>
    <scope>NUCLEOTIDE SEQUENCE [LARGE SCALE GENOMIC DNA]</scope>
    <source>
        <strain>AB307-0294</strain>
    </source>
</reference>
<dbReference type="EMBL" id="CP001172">
    <property type="protein sequence ID" value="ACJ59306.1"/>
    <property type="molecule type" value="Genomic_DNA"/>
</dbReference>
<dbReference type="RefSeq" id="WP_000382591.1">
    <property type="nucleotide sequence ID" value="NZ_CP001172.1"/>
</dbReference>
<dbReference type="SMR" id="B7H0J8"/>
<dbReference type="GeneID" id="92894415"/>
<dbReference type="HOGENOM" id="CLU_078938_4_1_6"/>
<dbReference type="Proteomes" id="UP000006924">
    <property type="component" value="Chromosome"/>
</dbReference>
<dbReference type="GO" id="GO:1990904">
    <property type="term" value="C:ribonucleoprotein complex"/>
    <property type="evidence" value="ECO:0007669"/>
    <property type="project" value="UniProtKB-KW"/>
</dbReference>
<dbReference type="GO" id="GO:0005840">
    <property type="term" value="C:ribosome"/>
    <property type="evidence" value="ECO:0007669"/>
    <property type="project" value="UniProtKB-KW"/>
</dbReference>
<dbReference type="GO" id="GO:0019843">
    <property type="term" value="F:rRNA binding"/>
    <property type="evidence" value="ECO:0007669"/>
    <property type="project" value="UniProtKB-UniRule"/>
</dbReference>
<dbReference type="GO" id="GO:0003735">
    <property type="term" value="F:structural constituent of ribosome"/>
    <property type="evidence" value="ECO:0007669"/>
    <property type="project" value="InterPro"/>
</dbReference>
<dbReference type="GO" id="GO:0006412">
    <property type="term" value="P:translation"/>
    <property type="evidence" value="ECO:0007669"/>
    <property type="project" value="UniProtKB-UniRule"/>
</dbReference>
<dbReference type="Gene3D" id="3.10.430.100">
    <property type="entry name" value="Ribosomal protein L9, C-terminal domain"/>
    <property type="match status" value="1"/>
</dbReference>
<dbReference type="Gene3D" id="3.40.5.10">
    <property type="entry name" value="Ribosomal protein L9, N-terminal domain"/>
    <property type="match status" value="1"/>
</dbReference>
<dbReference type="HAMAP" id="MF_00503">
    <property type="entry name" value="Ribosomal_bL9"/>
    <property type="match status" value="1"/>
</dbReference>
<dbReference type="InterPro" id="IPR000244">
    <property type="entry name" value="Ribosomal_bL9"/>
</dbReference>
<dbReference type="InterPro" id="IPR009027">
    <property type="entry name" value="Ribosomal_bL9/RNase_H1_N"/>
</dbReference>
<dbReference type="InterPro" id="IPR020594">
    <property type="entry name" value="Ribosomal_bL9_bac/chp"/>
</dbReference>
<dbReference type="InterPro" id="IPR020069">
    <property type="entry name" value="Ribosomal_bL9_C"/>
</dbReference>
<dbReference type="InterPro" id="IPR036791">
    <property type="entry name" value="Ribosomal_bL9_C_sf"/>
</dbReference>
<dbReference type="InterPro" id="IPR020070">
    <property type="entry name" value="Ribosomal_bL9_N"/>
</dbReference>
<dbReference type="InterPro" id="IPR036935">
    <property type="entry name" value="Ribosomal_bL9_N_sf"/>
</dbReference>
<dbReference type="NCBIfam" id="TIGR00158">
    <property type="entry name" value="L9"/>
    <property type="match status" value="1"/>
</dbReference>
<dbReference type="PANTHER" id="PTHR21368">
    <property type="entry name" value="50S RIBOSOMAL PROTEIN L9"/>
    <property type="match status" value="1"/>
</dbReference>
<dbReference type="Pfam" id="PF03948">
    <property type="entry name" value="Ribosomal_L9_C"/>
    <property type="match status" value="1"/>
</dbReference>
<dbReference type="Pfam" id="PF01281">
    <property type="entry name" value="Ribosomal_L9_N"/>
    <property type="match status" value="1"/>
</dbReference>
<dbReference type="SUPFAM" id="SSF55658">
    <property type="entry name" value="L9 N-domain-like"/>
    <property type="match status" value="1"/>
</dbReference>
<dbReference type="SUPFAM" id="SSF55653">
    <property type="entry name" value="Ribosomal protein L9 C-domain"/>
    <property type="match status" value="1"/>
</dbReference>
<dbReference type="PROSITE" id="PS00651">
    <property type="entry name" value="RIBOSOMAL_L9"/>
    <property type="match status" value="1"/>
</dbReference>
<keyword id="KW-0687">Ribonucleoprotein</keyword>
<keyword id="KW-0689">Ribosomal protein</keyword>
<keyword id="KW-0694">RNA-binding</keyword>
<keyword id="KW-0699">rRNA-binding</keyword>
<feature type="chain" id="PRO_1000126850" description="Large ribosomal subunit protein bL9">
    <location>
        <begin position="1"/>
        <end position="148"/>
    </location>
</feature>
<gene>
    <name evidence="1" type="primary">rplI</name>
    <name type="ordered locus">ABBFA_001291</name>
</gene>
<comment type="function">
    <text evidence="1">Binds to the 23S rRNA.</text>
</comment>
<comment type="similarity">
    <text evidence="1">Belongs to the bacterial ribosomal protein bL9 family.</text>
</comment>
<accession>B7H0J8</accession>
<name>RL9_ACIB3</name>
<protein>
    <recommendedName>
        <fullName evidence="1">Large ribosomal subunit protein bL9</fullName>
    </recommendedName>
    <alternativeName>
        <fullName evidence="2">50S ribosomal protein L9</fullName>
    </alternativeName>
</protein>
<sequence length="148" mass="15781">MDVILLQRIKNLGKLGDKVSVKAGYGRNFLIPQGKAVAATEANTAAFEARRAELEKQEAEVLAAAQARAEQLNEVNIVITAKAGDEGKLFGSIGTRDIADALTNAGLTVDRAEVRLPNGALRHTGEFNIAIQLHHDVVAEVLVTIVSE</sequence>